<organism>
    <name type="scientific">Shewanella sp. (strain ANA-3)</name>
    <dbReference type="NCBI Taxonomy" id="94122"/>
    <lineage>
        <taxon>Bacteria</taxon>
        <taxon>Pseudomonadati</taxon>
        <taxon>Pseudomonadota</taxon>
        <taxon>Gammaproteobacteria</taxon>
        <taxon>Alteromonadales</taxon>
        <taxon>Shewanellaceae</taxon>
        <taxon>Shewanella</taxon>
    </lineage>
</organism>
<reference key="1">
    <citation type="submission" date="2006-09" db="EMBL/GenBank/DDBJ databases">
        <title>Complete sequence of chromosome 1 of Shewanella sp. ANA-3.</title>
        <authorList>
            <person name="Copeland A."/>
            <person name="Lucas S."/>
            <person name="Lapidus A."/>
            <person name="Barry K."/>
            <person name="Detter J.C."/>
            <person name="Glavina del Rio T."/>
            <person name="Hammon N."/>
            <person name="Israni S."/>
            <person name="Dalin E."/>
            <person name="Tice H."/>
            <person name="Pitluck S."/>
            <person name="Chertkov O."/>
            <person name="Brettin T."/>
            <person name="Bruce D."/>
            <person name="Han C."/>
            <person name="Tapia R."/>
            <person name="Gilna P."/>
            <person name="Schmutz J."/>
            <person name="Larimer F."/>
            <person name="Land M."/>
            <person name="Hauser L."/>
            <person name="Kyrpides N."/>
            <person name="Kim E."/>
            <person name="Newman D."/>
            <person name="Salticov C."/>
            <person name="Konstantinidis K."/>
            <person name="Klappenback J."/>
            <person name="Tiedje J."/>
            <person name="Richardson P."/>
        </authorList>
    </citation>
    <scope>NUCLEOTIDE SEQUENCE [LARGE SCALE GENOMIC DNA]</scope>
    <source>
        <strain>ANA-3</strain>
    </source>
</reference>
<accession>A0L002</accession>
<evidence type="ECO:0000250" key="1"/>
<evidence type="ECO:0000255" key="2">
    <source>
        <dbReference type="HAMAP-Rule" id="MF_00492"/>
    </source>
</evidence>
<name>TAL_SHESA</name>
<gene>
    <name evidence="2" type="primary">tal</name>
    <name type="ordered locus">Shewana3_3147</name>
</gene>
<feature type="chain" id="PRO_1000014527" description="Transaldolase">
    <location>
        <begin position="1"/>
        <end position="318"/>
    </location>
</feature>
<feature type="active site" description="Schiff-base intermediate with substrate" evidence="2">
    <location>
        <position position="132"/>
    </location>
</feature>
<keyword id="KW-0963">Cytoplasm</keyword>
<keyword id="KW-0570">Pentose shunt</keyword>
<keyword id="KW-0704">Schiff base</keyword>
<keyword id="KW-0808">Transferase</keyword>
<protein>
    <recommendedName>
        <fullName evidence="2">Transaldolase</fullName>
        <ecNumber evidence="2">2.2.1.2</ecNumber>
    </recommendedName>
</protein>
<dbReference type="EC" id="2.2.1.2" evidence="2"/>
<dbReference type="EMBL" id="CP000469">
    <property type="protein sequence ID" value="ABK49371.1"/>
    <property type="molecule type" value="Genomic_DNA"/>
</dbReference>
<dbReference type="RefSeq" id="WP_011717972.1">
    <property type="nucleotide sequence ID" value="NC_008577.1"/>
</dbReference>
<dbReference type="SMR" id="A0L002"/>
<dbReference type="STRING" id="94122.Shewana3_3147"/>
<dbReference type="KEGG" id="shn:Shewana3_3147"/>
<dbReference type="eggNOG" id="COG0176">
    <property type="taxonomic scope" value="Bacteria"/>
</dbReference>
<dbReference type="HOGENOM" id="CLU_047470_0_1_6"/>
<dbReference type="OrthoDB" id="9809101at2"/>
<dbReference type="UniPathway" id="UPA00115">
    <property type="reaction ID" value="UER00414"/>
</dbReference>
<dbReference type="Proteomes" id="UP000002589">
    <property type="component" value="Chromosome"/>
</dbReference>
<dbReference type="GO" id="GO:0005829">
    <property type="term" value="C:cytosol"/>
    <property type="evidence" value="ECO:0007669"/>
    <property type="project" value="TreeGrafter"/>
</dbReference>
<dbReference type="GO" id="GO:0004801">
    <property type="term" value="F:transaldolase activity"/>
    <property type="evidence" value="ECO:0000250"/>
    <property type="project" value="UniProtKB"/>
</dbReference>
<dbReference type="GO" id="GO:0005975">
    <property type="term" value="P:carbohydrate metabolic process"/>
    <property type="evidence" value="ECO:0007669"/>
    <property type="project" value="InterPro"/>
</dbReference>
<dbReference type="GO" id="GO:0006098">
    <property type="term" value="P:pentose-phosphate shunt"/>
    <property type="evidence" value="ECO:0007669"/>
    <property type="project" value="UniProtKB-UniRule"/>
</dbReference>
<dbReference type="CDD" id="cd00957">
    <property type="entry name" value="Transaldolase_TalAB"/>
    <property type="match status" value="1"/>
</dbReference>
<dbReference type="FunFam" id="3.20.20.70:FF:000002">
    <property type="entry name" value="Transaldolase"/>
    <property type="match status" value="1"/>
</dbReference>
<dbReference type="Gene3D" id="3.20.20.70">
    <property type="entry name" value="Aldolase class I"/>
    <property type="match status" value="1"/>
</dbReference>
<dbReference type="HAMAP" id="MF_00492">
    <property type="entry name" value="Transaldolase_1"/>
    <property type="match status" value="1"/>
</dbReference>
<dbReference type="InterPro" id="IPR013785">
    <property type="entry name" value="Aldolase_TIM"/>
</dbReference>
<dbReference type="InterPro" id="IPR001585">
    <property type="entry name" value="TAL/FSA"/>
</dbReference>
<dbReference type="InterPro" id="IPR004730">
    <property type="entry name" value="Transaldolase_1"/>
</dbReference>
<dbReference type="InterPro" id="IPR018225">
    <property type="entry name" value="Transaldolase_AS"/>
</dbReference>
<dbReference type="NCBIfam" id="NF009001">
    <property type="entry name" value="PRK12346.1"/>
    <property type="match status" value="1"/>
</dbReference>
<dbReference type="NCBIfam" id="TIGR00874">
    <property type="entry name" value="talAB"/>
    <property type="match status" value="1"/>
</dbReference>
<dbReference type="PANTHER" id="PTHR10683">
    <property type="entry name" value="TRANSALDOLASE"/>
    <property type="match status" value="1"/>
</dbReference>
<dbReference type="PANTHER" id="PTHR10683:SF18">
    <property type="entry name" value="TRANSALDOLASE"/>
    <property type="match status" value="1"/>
</dbReference>
<dbReference type="Pfam" id="PF00923">
    <property type="entry name" value="TAL_FSA"/>
    <property type="match status" value="1"/>
</dbReference>
<dbReference type="SUPFAM" id="SSF51569">
    <property type="entry name" value="Aldolase"/>
    <property type="match status" value="1"/>
</dbReference>
<dbReference type="PROSITE" id="PS01054">
    <property type="entry name" value="TRANSALDOLASE_1"/>
    <property type="match status" value="1"/>
</dbReference>
<dbReference type="PROSITE" id="PS00958">
    <property type="entry name" value="TRANSALDOLASE_2"/>
    <property type="match status" value="1"/>
</dbReference>
<sequence>MANTLEQLKSYTTIVADTGDIEAIKRYQPEDATTNPSLILKAAQIPEYRALIDNAIAWAKLQSADIEQQIDDASDKLAVNIGVEILKLVPGRISTEVDARLSFDKEKSIAKAHKLVRLYQEAGVDKSRILIKLASTWEGICAAKELEQEGINCNLTLLFSFAQARACAEAGVYLISPFVGRILDWYKNDTGKDYDAVNDPGVVSVTEIYNYYKQHGYNTVVMGASFRNIGEIIELAGCDRLTIGPSLLEELANSQVAIQPKLLPASTTVAAGEPLTEAQFRWDFNQDPMAVDKLAEGIRNFAIDQGKLEVMLKAKLAN</sequence>
<comment type="function">
    <text evidence="2">Transaldolase is important for the balance of metabolites in the pentose-phosphate pathway.</text>
</comment>
<comment type="catalytic activity">
    <reaction evidence="2">
        <text>D-sedoheptulose 7-phosphate + D-glyceraldehyde 3-phosphate = D-erythrose 4-phosphate + beta-D-fructose 6-phosphate</text>
        <dbReference type="Rhea" id="RHEA:17053"/>
        <dbReference type="ChEBI" id="CHEBI:16897"/>
        <dbReference type="ChEBI" id="CHEBI:57483"/>
        <dbReference type="ChEBI" id="CHEBI:57634"/>
        <dbReference type="ChEBI" id="CHEBI:59776"/>
        <dbReference type="EC" id="2.2.1.2"/>
    </reaction>
</comment>
<comment type="pathway">
    <text evidence="2">Carbohydrate degradation; pentose phosphate pathway; D-glyceraldehyde 3-phosphate and beta-D-fructose 6-phosphate from D-ribose 5-phosphate and D-xylulose 5-phosphate (non-oxidative stage): step 2/3.</text>
</comment>
<comment type="subunit">
    <text evidence="1">Homodimer.</text>
</comment>
<comment type="subcellular location">
    <subcellularLocation>
        <location evidence="2">Cytoplasm</location>
    </subcellularLocation>
</comment>
<comment type="similarity">
    <text evidence="2">Belongs to the transaldolase family. Type 1 subfamily.</text>
</comment>
<proteinExistence type="inferred from homology"/>